<comment type="function">
    <text evidence="1">Part of a stress-induced multi-chaperone system, it is involved in the recovery of the cell from heat-induced damage, in cooperation with DnaK, DnaJ and GrpE. Acts before DnaK, in the processing of protein aggregates. Protein binding stimulates the ATPase activity; ATP hydrolysis unfolds the denatured protein aggregates, which probably helps expose new hydrophobic binding sites on the surface of ClpB-bound aggregates, contributing to the solubilization and refolding of denatured protein aggregates by DnaK (By similarity).</text>
</comment>
<comment type="subunit">
    <text evidence="1">Homohexamer. The oligomerization is ATP-dependent (By similarity).</text>
</comment>
<comment type="subcellular location">
    <subcellularLocation>
        <location evidence="3">Cytoplasm</location>
    </subcellularLocation>
</comment>
<comment type="domain">
    <text evidence="1">The Clp repeat (R) domain probably functions as a substrate-discriminating domain, recruiting aggregated proteins to the ClpB hexamer and/or stabilizing bound proteins. The NBD2 domain is responsible for oligomerization, whereas the NBD1 domain stabilizes the hexamer probably in an ATP-dependent manner. The movement of the coiled-coil domain is essential for ClpB ability to rescue proteins from an aggregated state, probably by pulling apart large aggregated proteins, which are bound between the coiled-coils motifs of adjacent ClpB subunits in the functional hexamer (By similarity).</text>
</comment>
<comment type="similarity">
    <text evidence="3">Belongs to the ClpA/ClpB family.</text>
</comment>
<feature type="chain" id="PRO_0000191128" description="Chaperone protein ClpB">
    <location>
        <begin position="1"/>
        <end position="859"/>
    </location>
</feature>
<feature type="domain" description="Clp R" evidence="2">
    <location>
        <begin position="4"/>
        <end position="146"/>
    </location>
</feature>
<feature type="region of interest" description="Repeat 1" evidence="2">
    <location>
        <begin position="7"/>
        <end position="72"/>
    </location>
</feature>
<feature type="region of interest" description="Repeat 2" evidence="2">
    <location>
        <begin position="85"/>
        <end position="146"/>
    </location>
</feature>
<feature type="region of interest" description="NBD1" evidence="1">
    <location>
        <begin position="159"/>
        <end position="339"/>
    </location>
</feature>
<feature type="region of interest" description="Linker" evidence="1">
    <location>
        <begin position="340"/>
        <end position="547"/>
    </location>
</feature>
<feature type="region of interest" description="NBD2" evidence="1">
    <location>
        <begin position="557"/>
        <end position="764"/>
    </location>
</feature>
<feature type="region of interest" description="C-terminal" evidence="1">
    <location>
        <begin position="765"/>
        <end position="859"/>
    </location>
</feature>
<feature type="coiled-coil region" evidence="1">
    <location>
        <begin position="390"/>
        <end position="524"/>
    </location>
</feature>
<feature type="binding site" evidence="1">
    <location>
        <begin position="206"/>
        <end position="213"/>
    </location>
    <ligand>
        <name>ATP</name>
        <dbReference type="ChEBI" id="CHEBI:30616"/>
        <label>1</label>
    </ligand>
</feature>
<feature type="binding site" evidence="1">
    <location>
        <begin position="607"/>
        <end position="614"/>
    </location>
    <ligand>
        <name>ATP</name>
        <dbReference type="ChEBI" id="CHEBI:30616"/>
        <label>2</label>
    </ligand>
</feature>
<reference key="1">
    <citation type="journal article" date="2003" name="Proc. Natl. Acad. Sci. U.S.A.">
        <title>The complete genome sequence of the carcinogenic bacterium Helicobacter hepaticus.</title>
        <authorList>
            <person name="Suerbaum S."/>
            <person name="Josenhans C."/>
            <person name="Sterzenbach T."/>
            <person name="Drescher B."/>
            <person name="Brandt P."/>
            <person name="Bell M."/>
            <person name="Droege M."/>
            <person name="Fartmann B."/>
            <person name="Fischer H.-P."/>
            <person name="Ge Z."/>
            <person name="Hoerster A."/>
            <person name="Holland R."/>
            <person name="Klein K."/>
            <person name="Koenig J."/>
            <person name="Macko L."/>
            <person name="Mendz G.L."/>
            <person name="Nyakatura G."/>
            <person name="Schauer D.B."/>
            <person name="Shen Z."/>
            <person name="Weber J."/>
            <person name="Frosch M."/>
            <person name="Fox J.G."/>
        </authorList>
    </citation>
    <scope>NUCLEOTIDE SEQUENCE [LARGE SCALE GENOMIC DNA]</scope>
    <source>
        <strain>ATCC 51449 / 3B1</strain>
    </source>
</reference>
<dbReference type="EMBL" id="AE017125">
    <property type="protein sequence ID" value="AAP76706.1"/>
    <property type="molecule type" value="Genomic_DNA"/>
</dbReference>
<dbReference type="RefSeq" id="WP_011114952.1">
    <property type="nucleotide sequence ID" value="NC_004917.1"/>
</dbReference>
<dbReference type="SMR" id="Q7VJY3"/>
<dbReference type="STRING" id="235279.HH_0109"/>
<dbReference type="KEGG" id="hhe:HH_0109"/>
<dbReference type="eggNOG" id="COG0542">
    <property type="taxonomic scope" value="Bacteria"/>
</dbReference>
<dbReference type="HOGENOM" id="CLU_005070_4_2_7"/>
<dbReference type="OrthoDB" id="9803641at2"/>
<dbReference type="Proteomes" id="UP000002495">
    <property type="component" value="Chromosome"/>
</dbReference>
<dbReference type="GO" id="GO:0005737">
    <property type="term" value="C:cytoplasm"/>
    <property type="evidence" value="ECO:0007669"/>
    <property type="project" value="UniProtKB-SubCell"/>
</dbReference>
<dbReference type="GO" id="GO:0005524">
    <property type="term" value="F:ATP binding"/>
    <property type="evidence" value="ECO:0007669"/>
    <property type="project" value="UniProtKB-KW"/>
</dbReference>
<dbReference type="GO" id="GO:0016887">
    <property type="term" value="F:ATP hydrolysis activity"/>
    <property type="evidence" value="ECO:0007669"/>
    <property type="project" value="InterPro"/>
</dbReference>
<dbReference type="GO" id="GO:0034605">
    <property type="term" value="P:cellular response to heat"/>
    <property type="evidence" value="ECO:0007669"/>
    <property type="project" value="TreeGrafter"/>
</dbReference>
<dbReference type="CDD" id="cd00009">
    <property type="entry name" value="AAA"/>
    <property type="match status" value="1"/>
</dbReference>
<dbReference type="CDD" id="cd19499">
    <property type="entry name" value="RecA-like_ClpB_Hsp104-like"/>
    <property type="match status" value="1"/>
</dbReference>
<dbReference type="FunFam" id="3.40.50.300:FF:000120">
    <property type="entry name" value="ATP-dependent chaperone ClpB"/>
    <property type="match status" value="1"/>
</dbReference>
<dbReference type="FunFam" id="3.40.50.300:FF:000025">
    <property type="entry name" value="ATP-dependent Clp protease subunit"/>
    <property type="match status" value="1"/>
</dbReference>
<dbReference type="FunFam" id="3.40.50.300:FF:000010">
    <property type="entry name" value="Chaperone clpB 1, putative"/>
    <property type="match status" value="1"/>
</dbReference>
<dbReference type="Gene3D" id="1.10.8.60">
    <property type="match status" value="1"/>
</dbReference>
<dbReference type="Gene3D" id="1.10.1780.10">
    <property type="entry name" value="Clp, N-terminal domain"/>
    <property type="match status" value="1"/>
</dbReference>
<dbReference type="Gene3D" id="3.40.50.300">
    <property type="entry name" value="P-loop containing nucleotide triphosphate hydrolases"/>
    <property type="match status" value="3"/>
</dbReference>
<dbReference type="InterPro" id="IPR003593">
    <property type="entry name" value="AAA+_ATPase"/>
</dbReference>
<dbReference type="InterPro" id="IPR003959">
    <property type="entry name" value="ATPase_AAA_core"/>
</dbReference>
<dbReference type="InterPro" id="IPR019489">
    <property type="entry name" value="Clp_ATPase_C"/>
</dbReference>
<dbReference type="InterPro" id="IPR036628">
    <property type="entry name" value="Clp_N_dom_sf"/>
</dbReference>
<dbReference type="InterPro" id="IPR004176">
    <property type="entry name" value="Clp_R_dom"/>
</dbReference>
<dbReference type="InterPro" id="IPR001270">
    <property type="entry name" value="ClpA/B"/>
</dbReference>
<dbReference type="InterPro" id="IPR018368">
    <property type="entry name" value="ClpA/B_CS1"/>
</dbReference>
<dbReference type="InterPro" id="IPR028299">
    <property type="entry name" value="ClpA/B_CS2"/>
</dbReference>
<dbReference type="InterPro" id="IPR041546">
    <property type="entry name" value="ClpA/ClpB_AAA_lid"/>
</dbReference>
<dbReference type="InterPro" id="IPR050130">
    <property type="entry name" value="ClpA_ClpB"/>
</dbReference>
<dbReference type="InterPro" id="IPR027417">
    <property type="entry name" value="P-loop_NTPase"/>
</dbReference>
<dbReference type="PANTHER" id="PTHR11638">
    <property type="entry name" value="ATP-DEPENDENT CLP PROTEASE"/>
    <property type="match status" value="1"/>
</dbReference>
<dbReference type="PANTHER" id="PTHR11638:SF18">
    <property type="entry name" value="HEAT SHOCK PROTEIN 104"/>
    <property type="match status" value="1"/>
</dbReference>
<dbReference type="Pfam" id="PF00004">
    <property type="entry name" value="AAA"/>
    <property type="match status" value="1"/>
</dbReference>
<dbReference type="Pfam" id="PF07724">
    <property type="entry name" value="AAA_2"/>
    <property type="match status" value="1"/>
</dbReference>
<dbReference type="Pfam" id="PF17871">
    <property type="entry name" value="AAA_lid_9"/>
    <property type="match status" value="1"/>
</dbReference>
<dbReference type="Pfam" id="PF02861">
    <property type="entry name" value="Clp_N"/>
    <property type="match status" value="2"/>
</dbReference>
<dbReference type="Pfam" id="PF10431">
    <property type="entry name" value="ClpB_D2-small"/>
    <property type="match status" value="1"/>
</dbReference>
<dbReference type="PRINTS" id="PR00300">
    <property type="entry name" value="CLPPROTEASEA"/>
</dbReference>
<dbReference type="SMART" id="SM00382">
    <property type="entry name" value="AAA"/>
    <property type="match status" value="2"/>
</dbReference>
<dbReference type="SMART" id="SM01086">
    <property type="entry name" value="ClpB_D2-small"/>
    <property type="match status" value="1"/>
</dbReference>
<dbReference type="SUPFAM" id="SSF81923">
    <property type="entry name" value="Double Clp-N motif"/>
    <property type="match status" value="1"/>
</dbReference>
<dbReference type="SUPFAM" id="SSF52540">
    <property type="entry name" value="P-loop containing nucleoside triphosphate hydrolases"/>
    <property type="match status" value="2"/>
</dbReference>
<dbReference type="PROSITE" id="PS51903">
    <property type="entry name" value="CLP_R"/>
    <property type="match status" value="1"/>
</dbReference>
<dbReference type="PROSITE" id="PS00870">
    <property type="entry name" value="CLPAB_1"/>
    <property type="match status" value="1"/>
</dbReference>
<dbReference type="PROSITE" id="PS00871">
    <property type="entry name" value="CLPAB_2"/>
    <property type="match status" value="1"/>
</dbReference>
<evidence type="ECO:0000250" key="1"/>
<evidence type="ECO:0000255" key="2">
    <source>
        <dbReference type="PROSITE-ProRule" id="PRU01251"/>
    </source>
</evidence>
<evidence type="ECO:0000305" key="3"/>
<accession>Q7VJY3</accession>
<protein>
    <recommendedName>
        <fullName>Chaperone protein ClpB</fullName>
    </recommendedName>
</protein>
<organism>
    <name type="scientific">Helicobacter hepaticus (strain ATCC 51449 / 3B1)</name>
    <dbReference type="NCBI Taxonomy" id="235279"/>
    <lineage>
        <taxon>Bacteria</taxon>
        <taxon>Pseudomonadati</taxon>
        <taxon>Campylobacterota</taxon>
        <taxon>Epsilonproteobacteria</taxon>
        <taxon>Campylobacterales</taxon>
        <taxon>Helicobacteraceae</taxon>
        <taxon>Helicobacter</taxon>
    </lineage>
</organism>
<sequence>MNLFEKLTNQMKETLDSAASLALHSSNQEISLAHIYWALLSNHQSVLNQALNKMNIDKTALELQARSEVDKLPKSSQVQKENLSISKELSSALNLAQGEAIKNGDSFIAVDMFLIANLKESTFVAIFKPLVDIAEFKKTLLSLRGESKIESQSGDDNLESLSKFGIDLTQKALENTLDPVIGRDDEINAMMQILIRKSKNNPILLGEPGVGKTAVVEGLAQRIVAKAVPTSLQNKKLIALDMSALIAGAKYRGEFEERLKNVVDEVKKAGNIILFIDEIHTIVGAGASEGSMDAANILKPALARGELHTIGATTLKEYRKYFEKDAALTRRFQPINVNEPSINEALQILRGIKPNLEAHHNVNITDAALVAAAKLSSRYITDRFLPDKAIDLIDEAAAELKMQIESEPLELSKIKKHIANLEVEKQALNMEKTNVNEARVLEIDKELENLREEKMSLEGKFEQEKSVFTRIATIKAELDSLKRESELAKRSGDYNKAAEIDYGKIPDIQAQEAALHKQWEEMQQNGTLLKNAVTQESIAGVVSRWSGIPIKKMLQSQKERILGIESELAKSVVGQDDAIKAIARAIKRNKAGLNDASRPIGSFLFLGPTGVGKTQCAKTLAEFLFDNAKSLVRIDMSEYMEKHAVSRLVGAPPGYVGYEEGGVLTEAIRRKPYSIVLFDEVEKAHPDVFNILLQVLDDGRLTDSKGVSVDFSNTIIILTSNIASDKIMEIGDKQERQKAVKEALKMYFKPEFLNRLDDVVVFNPLGLADITQIVDIMFKSLAKRALEKGINVTLSQEAREHIAQVGFDSVYGARPLKRALYEEVEDRLADLILRDEIKEGDRVNFALKNGEICTHIEKE</sequence>
<gene>
    <name type="primary">clpB</name>
    <name type="ordered locus">HH_0109</name>
</gene>
<name>CLPB_HELHP</name>
<keyword id="KW-0067">ATP-binding</keyword>
<keyword id="KW-0143">Chaperone</keyword>
<keyword id="KW-0175">Coiled coil</keyword>
<keyword id="KW-0963">Cytoplasm</keyword>
<keyword id="KW-0547">Nucleotide-binding</keyword>
<keyword id="KW-1185">Reference proteome</keyword>
<keyword id="KW-0677">Repeat</keyword>
<keyword id="KW-0346">Stress response</keyword>
<proteinExistence type="inferred from homology"/>